<sequence>MAEARDLFKEFKVQSVSEFFRRNAAMLGYTGSIRSLTTVIHEAVTNSLDACEEAGILPYVRVEIEELGKEHYKVIVEDNGPGIPEDYIPHVFGKMLAGTKAHRNIQSRGQQGIGISGAVMFAQITSGKATRVITSTGDDEIVEAWVKIDVQKNEGKIVKKIKHPNPKRWRGTRIELEVKNVKYVRSKQGVYWYLKLTAIANPHAHIELVEPDGKLIVFPRSSEDIPEPPVEMKPHPKGVMTDDVYTMAHRSKRSTVRRFLVSEFSRISDKKVDELVLYIAALRLINREVTDQNLKSQLIERLANGEVEKVLKSFGRKWKKVVEEVEKIMEKPPEKLTWHEAEEIVEAFKLMKFLAPPTYGLRPIGEENIEKGLSSILRPEFVTAVTRPPKVYSGGIPFQVEVGIAYGGEITNSEILRYANRVPLLFDAGSCVITSAVRSIDWRRYRVESFDNAPLVVLVNVVSVHVPYTSTGKQSIASIDEIYNEIRLALMEAARRLAAYLGGKYRRLYQIRRKKIFEKYLPEIARSLHILTGEPEEKIKEYFLRLIESKITVAQEGVSEVEVEEGEA</sequence>
<organism>
    <name type="scientific">Pyrococcus furiosus (strain ATCC 43587 / DSM 3638 / JCM 8422 / Vc1)</name>
    <dbReference type="NCBI Taxonomy" id="186497"/>
    <lineage>
        <taxon>Archaea</taxon>
        <taxon>Methanobacteriati</taxon>
        <taxon>Methanobacteriota</taxon>
        <taxon>Thermococci</taxon>
        <taxon>Thermococcales</taxon>
        <taxon>Thermococcaceae</taxon>
        <taxon>Pyrococcus</taxon>
    </lineage>
</organism>
<proteinExistence type="inferred from homology"/>
<reference key="1">
    <citation type="journal article" date="1999" name="Genetics">
        <title>Divergence of the hyperthermophilic archaea Pyrococcus furiosus and P. horikoshii inferred from complete genomic sequences.</title>
        <authorList>
            <person name="Maeder D.L."/>
            <person name="Weiss R.B."/>
            <person name="Dunn D.M."/>
            <person name="Cherry J.L."/>
            <person name="Gonzalez J.M."/>
            <person name="DiRuggiero J."/>
            <person name="Robb F.T."/>
        </authorList>
    </citation>
    <scope>NUCLEOTIDE SEQUENCE [LARGE SCALE GENOMIC DNA]</scope>
    <source>
        <strain>ATCC 43587 / DSM 3638 / JCM 8422 / Vc1</strain>
    </source>
</reference>
<dbReference type="EC" id="5.6.2.2" evidence="1"/>
<dbReference type="EMBL" id="AE009950">
    <property type="protein sequence ID" value="AAL81703.1"/>
    <property type="molecule type" value="Genomic_DNA"/>
</dbReference>
<dbReference type="RefSeq" id="WP_011012725.1">
    <property type="nucleotide sequence ID" value="NZ_CP023154.1"/>
</dbReference>
<dbReference type="SMR" id="Q8U0K8"/>
<dbReference type="IntAct" id="Q8U0K8">
    <property type="interactions" value="1"/>
</dbReference>
<dbReference type="STRING" id="186497.PF1579"/>
<dbReference type="PaxDb" id="186497-PF1579"/>
<dbReference type="GeneID" id="41713403"/>
<dbReference type="KEGG" id="pfu:PF1579"/>
<dbReference type="PATRIC" id="fig|186497.12.peg.1645"/>
<dbReference type="eggNOG" id="arCOG01165">
    <property type="taxonomic scope" value="Archaea"/>
</dbReference>
<dbReference type="HOGENOM" id="CLU_006403_0_0_2"/>
<dbReference type="OrthoDB" id="65493at2157"/>
<dbReference type="PhylomeDB" id="Q8U0K8"/>
<dbReference type="Proteomes" id="UP000001013">
    <property type="component" value="Chromosome"/>
</dbReference>
<dbReference type="GO" id="GO:0005524">
    <property type="term" value="F:ATP binding"/>
    <property type="evidence" value="ECO:0007669"/>
    <property type="project" value="UniProtKB-UniRule"/>
</dbReference>
<dbReference type="GO" id="GO:0003677">
    <property type="term" value="F:DNA binding"/>
    <property type="evidence" value="ECO:0007669"/>
    <property type="project" value="UniProtKB-UniRule"/>
</dbReference>
<dbReference type="GO" id="GO:0003918">
    <property type="term" value="F:DNA topoisomerase type II (double strand cut, ATP-hydrolyzing) activity"/>
    <property type="evidence" value="ECO:0007669"/>
    <property type="project" value="UniProtKB-UniRule"/>
</dbReference>
<dbReference type="GO" id="GO:0006265">
    <property type="term" value="P:DNA topological change"/>
    <property type="evidence" value="ECO:0007669"/>
    <property type="project" value="UniProtKB-UniRule"/>
</dbReference>
<dbReference type="CDD" id="cd16933">
    <property type="entry name" value="HATPase_TopVIB-like"/>
    <property type="match status" value="1"/>
</dbReference>
<dbReference type="CDD" id="cd00823">
    <property type="entry name" value="TopoIIB_Trans"/>
    <property type="match status" value="1"/>
</dbReference>
<dbReference type="FunFam" id="3.30.565.10:FF:000062">
    <property type="entry name" value="Type 2 DNA topoisomerase 6 subunit B"/>
    <property type="match status" value="1"/>
</dbReference>
<dbReference type="Gene3D" id="1.10.8.50">
    <property type="match status" value="1"/>
</dbReference>
<dbReference type="Gene3D" id="3.30.230.10">
    <property type="match status" value="1"/>
</dbReference>
<dbReference type="Gene3D" id="3.30.565.10">
    <property type="entry name" value="Histidine kinase-like ATPase, C-terminal domain"/>
    <property type="match status" value="1"/>
</dbReference>
<dbReference type="HAMAP" id="MF_00322">
    <property type="entry name" value="Top6B"/>
    <property type="match status" value="1"/>
</dbReference>
<dbReference type="InterPro" id="IPR036890">
    <property type="entry name" value="HATPase_C_sf"/>
</dbReference>
<dbReference type="InterPro" id="IPR020568">
    <property type="entry name" value="Ribosomal_Su5_D2-typ_SF"/>
</dbReference>
<dbReference type="InterPro" id="IPR014721">
    <property type="entry name" value="Ribsml_uS5_D2-typ_fold_subgr"/>
</dbReference>
<dbReference type="InterPro" id="IPR005734">
    <property type="entry name" value="TopoVI_B"/>
</dbReference>
<dbReference type="InterPro" id="IPR015320">
    <property type="entry name" value="TopoVI_B_transducer"/>
</dbReference>
<dbReference type="NCBIfam" id="NF003218">
    <property type="entry name" value="PRK04184.1"/>
    <property type="match status" value="1"/>
</dbReference>
<dbReference type="NCBIfam" id="TIGR01052">
    <property type="entry name" value="top6b"/>
    <property type="match status" value="1"/>
</dbReference>
<dbReference type="PANTHER" id="PTHR48444">
    <property type="entry name" value="DNA TOPOISOMERASE 6 SUBUNIT B"/>
    <property type="match status" value="1"/>
</dbReference>
<dbReference type="PANTHER" id="PTHR48444:SF1">
    <property type="entry name" value="DNA TOPOISOMERASE 6 SUBUNIT B"/>
    <property type="match status" value="1"/>
</dbReference>
<dbReference type="Pfam" id="PF02518">
    <property type="entry name" value="HATPase_c"/>
    <property type="match status" value="1"/>
</dbReference>
<dbReference type="Pfam" id="PF09239">
    <property type="entry name" value="Topo-VIb_trans"/>
    <property type="match status" value="1"/>
</dbReference>
<dbReference type="PIRSF" id="PIRSF006553">
    <property type="entry name" value="TopoVI_B"/>
    <property type="match status" value="1"/>
</dbReference>
<dbReference type="SMART" id="SM00387">
    <property type="entry name" value="HATPase_c"/>
    <property type="match status" value="1"/>
</dbReference>
<dbReference type="SUPFAM" id="SSF55874">
    <property type="entry name" value="ATPase domain of HSP90 chaperone/DNA topoisomerase II/histidine kinase"/>
    <property type="match status" value="1"/>
</dbReference>
<dbReference type="SUPFAM" id="SSF54211">
    <property type="entry name" value="Ribosomal protein S5 domain 2-like"/>
    <property type="match status" value="1"/>
</dbReference>
<name>TOP6B_PYRFU</name>
<evidence type="ECO:0000255" key="1">
    <source>
        <dbReference type="HAMAP-Rule" id="MF_00322"/>
    </source>
</evidence>
<protein>
    <recommendedName>
        <fullName evidence="1">Type 2 DNA topoisomerase 6 subunit B</fullName>
        <ecNumber evidence="1">5.6.2.2</ecNumber>
    </recommendedName>
    <alternativeName>
        <fullName evidence="1">Type II DNA topoisomerase VI subunit B</fullName>
        <shortName evidence="1">TopoVI-B</shortName>
    </alternativeName>
</protein>
<keyword id="KW-0067">ATP-binding</keyword>
<keyword id="KW-0238">DNA-binding</keyword>
<keyword id="KW-0413">Isomerase</keyword>
<keyword id="KW-0547">Nucleotide-binding</keyword>
<keyword id="KW-1185">Reference proteome</keyword>
<keyword id="KW-0799">Topoisomerase</keyword>
<accession>Q8U0K8</accession>
<gene>
    <name evidence="1" type="primary">top6B</name>
    <name type="ordered locus">PF1579</name>
</gene>
<comment type="function">
    <text evidence="1">Relaxes both positive and negative superturns and exhibits a strong decatenase activity.</text>
</comment>
<comment type="catalytic activity">
    <reaction evidence="1">
        <text>ATP-dependent breakage, passage and rejoining of double-stranded DNA.</text>
        <dbReference type="EC" id="5.6.2.2"/>
    </reaction>
</comment>
<comment type="subunit">
    <text evidence="1">Homodimer. Heterotetramer of two Top6A and two Top6B chains.</text>
</comment>
<comment type="similarity">
    <text evidence="1">Belongs to the TOP6B family.</text>
</comment>
<feature type="chain" id="PRO_0000145467" description="Type 2 DNA topoisomerase 6 subunit B">
    <location>
        <begin position="1"/>
        <end position="568"/>
    </location>
</feature>
<feature type="binding site" evidence="1">
    <location>
        <position position="46"/>
    </location>
    <ligand>
        <name>ATP</name>
        <dbReference type="ChEBI" id="CHEBI:30616"/>
    </ligand>
</feature>
<feature type="binding site" evidence="1">
    <location>
        <position position="78"/>
    </location>
    <ligand>
        <name>ATP</name>
        <dbReference type="ChEBI" id="CHEBI:30616"/>
    </ligand>
</feature>
<feature type="binding site" evidence="1">
    <location>
        <begin position="99"/>
        <end position="100"/>
    </location>
    <ligand>
        <name>ATP</name>
        <dbReference type="ChEBI" id="CHEBI:30616"/>
    </ligand>
</feature>
<feature type="binding site" evidence="1">
    <location>
        <begin position="109"/>
        <end position="116"/>
    </location>
    <ligand>
        <name>ATP</name>
        <dbReference type="ChEBI" id="CHEBI:30616"/>
    </ligand>
</feature>
<feature type="binding site" evidence="1">
    <location>
        <position position="473"/>
    </location>
    <ligand>
        <name>ATP</name>
        <dbReference type="ChEBI" id="CHEBI:30616"/>
    </ligand>
</feature>